<protein>
    <recommendedName>
        <fullName evidence="1">Nucleoid occlusion protein</fullName>
        <shortName evidence="1">Noc</shortName>
    </recommendedName>
</protein>
<name>NOC_BACLD</name>
<comment type="function">
    <text evidence="1">Effects nucleoid occlusion by binding relatively nonspecifically to DNA and preventing the assembly of the division machinery in the vicinity of the nucleoid, especially under conditions that disturb the cell cycle. It helps to coordinate cell division and chromosome segregation by preventing the formation of the Z ring through the nucleoid, which would cause chromosome breakage.</text>
</comment>
<comment type="subcellular location">
    <subcellularLocation>
        <location evidence="1">Cytoplasm</location>
        <location evidence="1">Nucleoid</location>
    </subcellularLocation>
</comment>
<comment type="similarity">
    <text evidence="1">Belongs to the ParB family.</text>
</comment>
<feature type="chain" id="PRO_0000346624" description="Nucleoid occlusion protein">
    <location>
        <begin position="1"/>
        <end position="283"/>
    </location>
</feature>
<feature type="DNA-binding region" description="H-T-H motif" evidence="1">
    <location>
        <begin position="148"/>
        <end position="167"/>
    </location>
</feature>
<proteinExistence type="inferred from homology"/>
<organism>
    <name type="scientific">Bacillus licheniformis (strain ATCC 14580 / DSM 13 / JCM 2505 / CCUG 7422 / NBRC 12200 / NCIMB 9375 / NCTC 10341 / NRRL NRS-1264 / Gibson 46)</name>
    <dbReference type="NCBI Taxonomy" id="279010"/>
    <lineage>
        <taxon>Bacteria</taxon>
        <taxon>Bacillati</taxon>
        <taxon>Bacillota</taxon>
        <taxon>Bacilli</taxon>
        <taxon>Bacillales</taxon>
        <taxon>Bacillaceae</taxon>
        <taxon>Bacillus</taxon>
    </lineage>
</organism>
<dbReference type="EMBL" id="CP000002">
    <property type="protein sequence ID" value="AAU25798.1"/>
    <property type="molecule type" value="Genomic_DNA"/>
</dbReference>
<dbReference type="EMBL" id="AE017333">
    <property type="protein sequence ID" value="AAU43180.1"/>
    <property type="molecule type" value="Genomic_DNA"/>
</dbReference>
<dbReference type="RefSeq" id="WP_003178042.1">
    <property type="nucleotide sequence ID" value="NC_006322.1"/>
</dbReference>
<dbReference type="SMR" id="Q65CN4"/>
<dbReference type="STRING" id="279010.BL00107"/>
<dbReference type="GeneID" id="92859058"/>
<dbReference type="KEGG" id="bld:BLi04372"/>
<dbReference type="KEGG" id="bli:BL00107"/>
<dbReference type="eggNOG" id="COG1475">
    <property type="taxonomic scope" value="Bacteria"/>
</dbReference>
<dbReference type="HOGENOM" id="CLU_023853_0_1_9"/>
<dbReference type="Proteomes" id="UP000000606">
    <property type="component" value="Chromosome"/>
</dbReference>
<dbReference type="GO" id="GO:0005694">
    <property type="term" value="C:chromosome"/>
    <property type="evidence" value="ECO:0007669"/>
    <property type="project" value="TreeGrafter"/>
</dbReference>
<dbReference type="GO" id="GO:0005737">
    <property type="term" value="C:cytoplasm"/>
    <property type="evidence" value="ECO:0007669"/>
    <property type="project" value="UniProtKB-UniRule"/>
</dbReference>
<dbReference type="GO" id="GO:0009295">
    <property type="term" value="C:nucleoid"/>
    <property type="evidence" value="ECO:0007669"/>
    <property type="project" value="UniProtKB-SubCell"/>
</dbReference>
<dbReference type="GO" id="GO:0003677">
    <property type="term" value="F:DNA binding"/>
    <property type="evidence" value="ECO:0007669"/>
    <property type="project" value="UniProtKB-UniRule"/>
</dbReference>
<dbReference type="GO" id="GO:0007059">
    <property type="term" value="P:chromosome segregation"/>
    <property type="evidence" value="ECO:0007669"/>
    <property type="project" value="TreeGrafter"/>
</dbReference>
<dbReference type="GO" id="GO:0000917">
    <property type="term" value="P:division septum assembly"/>
    <property type="evidence" value="ECO:0007669"/>
    <property type="project" value="UniProtKB-KW"/>
</dbReference>
<dbReference type="GO" id="GO:0045881">
    <property type="term" value="P:positive regulation of sporulation resulting in formation of a cellular spore"/>
    <property type="evidence" value="ECO:0007669"/>
    <property type="project" value="TreeGrafter"/>
</dbReference>
<dbReference type="CDD" id="cd16393">
    <property type="entry name" value="SPO0J_N"/>
    <property type="match status" value="1"/>
</dbReference>
<dbReference type="FunFam" id="1.10.10.2830:FF:000001">
    <property type="entry name" value="Chromosome partitioning protein ParB"/>
    <property type="match status" value="1"/>
</dbReference>
<dbReference type="FunFam" id="3.90.1530.30:FF:000001">
    <property type="entry name" value="Chromosome partitioning protein ParB"/>
    <property type="match status" value="1"/>
</dbReference>
<dbReference type="Gene3D" id="1.10.10.2830">
    <property type="match status" value="1"/>
</dbReference>
<dbReference type="Gene3D" id="3.90.1530.30">
    <property type="match status" value="1"/>
</dbReference>
<dbReference type="HAMAP" id="MF_02015">
    <property type="entry name" value="ParB_Noc"/>
    <property type="match status" value="1"/>
</dbReference>
<dbReference type="InterPro" id="IPR050336">
    <property type="entry name" value="Chromosome_partition/occlusion"/>
</dbReference>
<dbReference type="InterPro" id="IPR041468">
    <property type="entry name" value="HTH_ParB/Spo0J"/>
</dbReference>
<dbReference type="InterPro" id="IPR023705">
    <property type="entry name" value="Nucleoid_occlusion_protein"/>
</dbReference>
<dbReference type="InterPro" id="IPR004437">
    <property type="entry name" value="ParB/RepB/Spo0J"/>
</dbReference>
<dbReference type="InterPro" id="IPR003115">
    <property type="entry name" value="ParB/Sulfiredoxin_dom"/>
</dbReference>
<dbReference type="InterPro" id="IPR036086">
    <property type="entry name" value="ParB/Sulfiredoxin_sf"/>
</dbReference>
<dbReference type="NCBIfam" id="TIGR04285">
    <property type="entry name" value="nucleoid_noc"/>
    <property type="match status" value="1"/>
</dbReference>
<dbReference type="NCBIfam" id="TIGR00180">
    <property type="entry name" value="parB_part"/>
    <property type="match status" value="1"/>
</dbReference>
<dbReference type="PANTHER" id="PTHR33375">
    <property type="entry name" value="CHROMOSOME-PARTITIONING PROTEIN PARB-RELATED"/>
    <property type="match status" value="1"/>
</dbReference>
<dbReference type="PANTHER" id="PTHR33375:SF8">
    <property type="entry name" value="NUCLEOID OCCLUSION PROTEIN"/>
    <property type="match status" value="1"/>
</dbReference>
<dbReference type="Pfam" id="PF17762">
    <property type="entry name" value="HTH_ParB"/>
    <property type="match status" value="1"/>
</dbReference>
<dbReference type="Pfam" id="PF02195">
    <property type="entry name" value="ParBc"/>
    <property type="match status" value="1"/>
</dbReference>
<dbReference type="SMART" id="SM00470">
    <property type="entry name" value="ParB"/>
    <property type="match status" value="1"/>
</dbReference>
<dbReference type="SUPFAM" id="SSF109709">
    <property type="entry name" value="KorB DNA-binding domain-like"/>
    <property type="match status" value="1"/>
</dbReference>
<dbReference type="SUPFAM" id="SSF110849">
    <property type="entry name" value="ParB/Sulfiredoxin"/>
    <property type="match status" value="1"/>
</dbReference>
<sequence>MKHSFSRLFGLGDKEEEAEIAEHDTNKEEIQEIPVGDIIPNRFQPRTIFSEEKIKELAATIHTHGIIQPIVVRKTEREGQYELIAGERRWRAVQTLDWEKVPAIIKDFSDTETASVALIENLQREELSSIEEAHAYARLLELHDLTQEALAQRLGKGQSTIANKLRLLKLPEEVQEAILKKEISERHARALIPLKQPDLQVKLLHEVIEKSLNVKQTEDRVVKMLEQDKRKPKPKRKAYSRDARIAMNTIRQSLSMVEDSGVKLNTEEEEFEEYIQFTIRIPK</sequence>
<reference key="1">
    <citation type="journal article" date="2004" name="J. Mol. Microbiol. Biotechnol.">
        <title>The complete genome sequence of Bacillus licheniformis DSM13, an organism with great industrial potential.</title>
        <authorList>
            <person name="Veith B."/>
            <person name="Herzberg C."/>
            <person name="Steckel S."/>
            <person name="Feesche J."/>
            <person name="Maurer K.H."/>
            <person name="Ehrenreich P."/>
            <person name="Baeumer S."/>
            <person name="Henne A."/>
            <person name="Liesegang H."/>
            <person name="Merkl R."/>
            <person name="Ehrenreich A."/>
            <person name="Gottschalk G."/>
        </authorList>
    </citation>
    <scope>NUCLEOTIDE SEQUENCE [LARGE SCALE GENOMIC DNA]</scope>
    <source>
        <strain>ATCC 14580 / DSM 13 / JCM 2505 / CCUG 7422 / NBRC 12200 / NCIMB 9375 / NCTC 10341 / NRRL NRS-1264 / Gibson 46</strain>
    </source>
</reference>
<reference key="2">
    <citation type="journal article" date="2004" name="Genome Biol.">
        <title>Complete genome sequence of the industrial bacterium Bacillus licheniformis and comparisons with closely related Bacillus species.</title>
        <authorList>
            <person name="Rey M.W."/>
            <person name="Ramaiya P."/>
            <person name="Nelson B.A."/>
            <person name="Brody-Karpin S.D."/>
            <person name="Zaretsky E.J."/>
            <person name="Tang M."/>
            <person name="Lopez de Leon A."/>
            <person name="Xiang H."/>
            <person name="Gusti V."/>
            <person name="Clausen I.G."/>
            <person name="Olsen P.B."/>
            <person name="Rasmussen M.D."/>
            <person name="Andersen J.T."/>
            <person name="Joergensen P.L."/>
            <person name="Larsen T.S."/>
            <person name="Sorokin A."/>
            <person name="Bolotin A."/>
            <person name="Lapidus A."/>
            <person name="Galleron N."/>
            <person name="Ehrlich S.D."/>
            <person name="Berka R.M."/>
        </authorList>
    </citation>
    <scope>NUCLEOTIDE SEQUENCE [LARGE SCALE GENOMIC DNA]</scope>
    <source>
        <strain>ATCC 14580 / DSM 13 / JCM 2505 / CCUG 7422 / NBRC 12200 / NCIMB 9375 / NCTC 10341 / NRRL NRS-1264 / Gibson 46</strain>
    </source>
</reference>
<accession>Q65CN4</accession>
<accession>Q62N63</accession>
<evidence type="ECO:0000255" key="1">
    <source>
        <dbReference type="HAMAP-Rule" id="MF_02015"/>
    </source>
</evidence>
<keyword id="KW-0131">Cell cycle</keyword>
<keyword id="KW-0132">Cell division</keyword>
<keyword id="KW-0963">Cytoplasm</keyword>
<keyword id="KW-0238">DNA-binding</keyword>
<keyword id="KW-1185">Reference proteome</keyword>
<keyword id="KW-0717">Septation</keyword>
<gene>
    <name evidence="1" type="primary">noc</name>
    <name type="ordered locus">BLi04372</name>
    <name type="ordered locus">BL00107</name>
</gene>